<sequence>MTTTKRLKFENLRIQFSNAIVGNFLRLPHSIINVLESTNYAIQEFGIAVHSHNSDIPIVHLGWDGHDSGSSENVVLINPVLATVYDLNQKSPLVDLYIQRYDHTHLATEVYVTPETSDDWEIIDANAMRFQNGEILHQTRIVTPGETLICYLEGIVTKFKIDRVEPSMKSARITDGSLVVVAPKVNKTRLVKAEYGHSNKTILKNGAIQLLKKVILRSTVCKMDFPKDNLFVVYISDGAQLPSQKGYASIVKCSLRQSKKSDSDNKSVGIPSKKIGVFIKCDSQIPENHIALSSHLWDAFFTHPMNGAKIKLEFLQMNQANIISGRNATVNIKYFGKDVPTKSGDQYSKLLGGSLLTNNLILPTEQIIIEIKKGESEQQLCNLNEISNESVQWKVTQMGKEEVKDIIERHLPKHYHVKETGEVSRTSKDEDDFITVNSIKKEMVNYLTSPIIATPAIILDGKQGIGKTRLLKELINEVEKDHHIFVKYADCETLHETSNLDKTQKLIMEWCSFCYWYGPSLIVLDNVEALFGKPQANDGDPSNNGQWDNASKLLNFFINQVTKIFNKDNKRIRVLFSGKQKTQINPLLFDKHFVSETWSLRAPDKHARAKLLEYFFSKNQIMKLNRDLQFSDLSLETEGFSPLDLEIFTEKIFYDLQLERDCDNVVTRELFSKSLSAFTPSALRGVKLTKETNIKWGDIGALANAKDVLLETLEWPTKYEPIFVNCPLRLRSGILLYGYPGCGKTLLASAVAQQCGLNFISVKGPEILNKFIGASEQNIRELFERAQSVKPCILFFDEFDSIAPKRGHDSTGVTDRVVNQLLTQMDGAEGLDGVYILAATSRPDLIDSALLRPGRLDKSVICNIPTESERLDILQAIVNSKDKDTGQKKFALEKNADLKLIAEKTAGFSGADLQGLCYNAYLKSVHRWLSAADQSEVVPGNDNIEYFSINEHGRREENRLRLKTLLQQDVVHETKTSTSAASELTAVVTINDLLEACQETKPSISTSELVKLRGIYDRFQKDRNGEMPNGENSIDIGSRLSLM</sequence>
<evidence type="ECO:0000255" key="1"/>
<evidence type="ECO:0000269" key="2">
    <source>
    </source>
</evidence>
<evidence type="ECO:0000269" key="3">
    <source>
    </source>
</evidence>
<evidence type="ECO:0000269" key="4">
    <source>
    </source>
</evidence>
<evidence type="ECO:0000269" key="5">
    <source>
    </source>
</evidence>
<evidence type="ECO:0000269" key="6">
    <source>
    </source>
</evidence>
<evidence type="ECO:0000269" key="7">
    <source>
    </source>
</evidence>
<evidence type="ECO:0000269" key="8">
    <source>
    </source>
</evidence>
<evidence type="ECO:0000269" key="9">
    <source>
    </source>
</evidence>
<evidence type="ECO:0000269" key="10">
    <source>
    </source>
</evidence>
<evidence type="ECO:0000303" key="11">
    <source>
    </source>
</evidence>
<evidence type="ECO:0000303" key="12">
    <source>
    </source>
</evidence>
<evidence type="ECO:0000305" key="13"/>
<evidence type="ECO:0000312" key="14">
    <source>
        <dbReference type="SGD" id="S000001680"/>
    </source>
</evidence>
<gene>
    <name evidence="11 14" type="primary">PEX1</name>
    <name evidence="12" type="synonym">PAS1</name>
    <name type="ordered locus">YKL197C</name>
</gene>
<accession>P24004</accession>
<accession>D6VX03</accession>
<name>PEX1_YEAST</name>
<dbReference type="EC" id="3.6.4.-" evidence="7 8 9"/>
<dbReference type="EMBL" id="M58676">
    <property type="protein sequence ID" value="AAA34842.1"/>
    <property type="molecule type" value="Genomic_DNA"/>
</dbReference>
<dbReference type="EMBL" id="Z28197">
    <property type="protein sequence ID" value="CAA82041.1"/>
    <property type="molecule type" value="Genomic_DNA"/>
</dbReference>
<dbReference type="EMBL" id="BK006944">
    <property type="protein sequence ID" value="DAA08969.1"/>
    <property type="molecule type" value="Genomic_DNA"/>
</dbReference>
<dbReference type="PIR" id="S38034">
    <property type="entry name" value="S38034"/>
</dbReference>
<dbReference type="RefSeq" id="NP_012724.1">
    <property type="nucleotide sequence ID" value="NM_001179763.1"/>
</dbReference>
<dbReference type="PDB" id="8C0V">
    <property type="method" value="EM"/>
    <property type="resolution" value="4.10 A"/>
    <property type="chains" value="A/C/E=201-1023"/>
</dbReference>
<dbReference type="PDB" id="8C0W">
    <property type="method" value="EM"/>
    <property type="resolution" value="4.70 A"/>
    <property type="chains" value="B/D/F=201-1023"/>
</dbReference>
<dbReference type="PDB" id="8U0V">
    <property type="method" value="EM"/>
    <property type="resolution" value="3.89 A"/>
    <property type="chains" value="A/C/E=1-1043"/>
</dbReference>
<dbReference type="PDBsum" id="8C0V"/>
<dbReference type="PDBsum" id="8C0W"/>
<dbReference type="PDBsum" id="8U0V"/>
<dbReference type="EMDB" id="EMD-16372"/>
<dbReference type="EMDB" id="EMD-16373"/>
<dbReference type="EMDB" id="EMD-2582"/>
<dbReference type="EMDB" id="EMD-2583"/>
<dbReference type="EMDB" id="EMD-2584"/>
<dbReference type="EMDB" id="EMD-2585"/>
<dbReference type="EMDB" id="EMD-2586"/>
<dbReference type="EMDB" id="EMD-2587"/>
<dbReference type="EMDB" id="EMD-2588"/>
<dbReference type="EMDB" id="EMD-41788"/>
<dbReference type="EMDB" id="EMD-6253"/>
<dbReference type="EMDB" id="EMD-6254"/>
<dbReference type="EMDB" id="EMD-6255"/>
<dbReference type="EMDB" id="EMD-6359"/>
<dbReference type="EMDB" id="EMD-6360"/>
<dbReference type="SMR" id="P24004"/>
<dbReference type="BioGRID" id="33923">
    <property type="interactions" value="166"/>
</dbReference>
<dbReference type="ComplexPortal" id="CPX-1901">
    <property type="entry name" value="Peroxisomal receptor export module complex"/>
</dbReference>
<dbReference type="DIP" id="DIP-4266N"/>
<dbReference type="FunCoup" id="P24004">
    <property type="interactions" value="281"/>
</dbReference>
<dbReference type="IntAct" id="P24004">
    <property type="interactions" value="13"/>
</dbReference>
<dbReference type="STRING" id="4932.YKL197C"/>
<dbReference type="TCDB" id="3.A.20.1.5">
    <property type="family name" value="the peroxisomal protein importer (ppi) family"/>
</dbReference>
<dbReference type="GlyGen" id="P24004">
    <property type="glycosylation" value="1 site"/>
</dbReference>
<dbReference type="iPTMnet" id="P24004"/>
<dbReference type="PaxDb" id="4932-YKL197C"/>
<dbReference type="PeptideAtlas" id="P24004"/>
<dbReference type="EnsemblFungi" id="YKL197C_mRNA">
    <property type="protein sequence ID" value="YKL197C"/>
    <property type="gene ID" value="YKL197C"/>
</dbReference>
<dbReference type="GeneID" id="853636"/>
<dbReference type="KEGG" id="sce:YKL197C"/>
<dbReference type="AGR" id="SGD:S000001680"/>
<dbReference type="SGD" id="S000001680">
    <property type="gene designation" value="PEX1"/>
</dbReference>
<dbReference type="VEuPathDB" id="FungiDB:YKL197C"/>
<dbReference type="eggNOG" id="KOG0735">
    <property type="taxonomic scope" value="Eukaryota"/>
</dbReference>
<dbReference type="GeneTree" id="ENSGT00550000075032"/>
<dbReference type="HOGENOM" id="CLU_000688_1_1_1"/>
<dbReference type="InParanoid" id="P24004"/>
<dbReference type="OMA" id="LCYNAYL"/>
<dbReference type="OrthoDB" id="2187at2759"/>
<dbReference type="BioCyc" id="YEAST:G3O-31959-MONOMER"/>
<dbReference type="BRENDA" id="3.6.4.7">
    <property type="organism ID" value="984"/>
</dbReference>
<dbReference type="BioGRID-ORCS" id="853636">
    <property type="hits" value="0 hits in 10 CRISPR screens"/>
</dbReference>
<dbReference type="PRO" id="PR:P24004"/>
<dbReference type="Proteomes" id="UP000002311">
    <property type="component" value="Chromosome XI"/>
</dbReference>
<dbReference type="RNAct" id="P24004">
    <property type="molecule type" value="protein"/>
</dbReference>
<dbReference type="GO" id="GO:1904949">
    <property type="term" value="C:ATPase complex"/>
    <property type="evidence" value="ECO:0000314"/>
    <property type="project" value="UniProt"/>
</dbReference>
<dbReference type="GO" id="GO:0005829">
    <property type="term" value="C:cytosol"/>
    <property type="evidence" value="ECO:0007005"/>
    <property type="project" value="SGD"/>
</dbReference>
<dbReference type="GO" id="GO:0005778">
    <property type="term" value="C:peroxisomal membrane"/>
    <property type="evidence" value="ECO:0000314"/>
    <property type="project" value="SGD"/>
</dbReference>
<dbReference type="GO" id="GO:0005777">
    <property type="term" value="C:peroxisome"/>
    <property type="evidence" value="ECO:0007005"/>
    <property type="project" value="SGD"/>
</dbReference>
<dbReference type="GO" id="GO:1990351">
    <property type="term" value="C:transporter complex"/>
    <property type="evidence" value="ECO:0000314"/>
    <property type="project" value="UniProt"/>
</dbReference>
<dbReference type="GO" id="GO:0005524">
    <property type="term" value="F:ATP binding"/>
    <property type="evidence" value="ECO:0007669"/>
    <property type="project" value="UniProtKB-KW"/>
</dbReference>
<dbReference type="GO" id="GO:0016887">
    <property type="term" value="F:ATP hydrolysis activity"/>
    <property type="evidence" value="ECO:0000315"/>
    <property type="project" value="SGD"/>
</dbReference>
<dbReference type="GO" id="GO:0140318">
    <property type="term" value="F:protein transporter activity"/>
    <property type="evidence" value="ECO:0000314"/>
    <property type="project" value="UniProtKB"/>
</dbReference>
<dbReference type="GO" id="GO:0016558">
    <property type="term" value="P:protein import into peroxisome matrix"/>
    <property type="evidence" value="ECO:0000314"/>
    <property type="project" value="SGD"/>
</dbReference>
<dbReference type="GO" id="GO:0016562">
    <property type="term" value="P:protein import into peroxisome matrix, receptor recycling"/>
    <property type="evidence" value="ECO:0000314"/>
    <property type="project" value="UniProtKB"/>
</dbReference>
<dbReference type="GO" id="GO:0043335">
    <property type="term" value="P:protein unfolding"/>
    <property type="evidence" value="ECO:0000314"/>
    <property type="project" value="UniProtKB"/>
</dbReference>
<dbReference type="CDD" id="cd19526">
    <property type="entry name" value="RecA-like_PEX1_r2"/>
    <property type="match status" value="1"/>
</dbReference>
<dbReference type="FunFam" id="3.10.330.10:FF:000016">
    <property type="entry name" value="AAA ATPase"/>
    <property type="match status" value="1"/>
</dbReference>
<dbReference type="FunFam" id="3.40.50.300:FF:000149">
    <property type="entry name" value="Nuclear valosin-containing protein-like"/>
    <property type="match status" value="1"/>
</dbReference>
<dbReference type="Gene3D" id="1.10.8.60">
    <property type="match status" value="1"/>
</dbReference>
<dbReference type="Gene3D" id="3.10.330.10">
    <property type="match status" value="1"/>
</dbReference>
<dbReference type="Gene3D" id="3.40.50.300">
    <property type="entry name" value="P-loop containing nucleotide triphosphate hydrolases"/>
    <property type="match status" value="2"/>
</dbReference>
<dbReference type="InterPro" id="IPR003593">
    <property type="entry name" value="AAA+_ATPase"/>
</dbReference>
<dbReference type="InterPro" id="IPR050168">
    <property type="entry name" value="AAA_ATPase_domain"/>
</dbReference>
<dbReference type="InterPro" id="IPR041569">
    <property type="entry name" value="AAA_lid_3"/>
</dbReference>
<dbReference type="InterPro" id="IPR003959">
    <property type="entry name" value="ATPase_AAA_core"/>
</dbReference>
<dbReference type="InterPro" id="IPR003960">
    <property type="entry name" value="ATPase_AAA_CS"/>
</dbReference>
<dbReference type="InterPro" id="IPR029067">
    <property type="entry name" value="CDC48_domain_2-like_sf"/>
</dbReference>
<dbReference type="InterPro" id="IPR027417">
    <property type="entry name" value="P-loop_NTPase"/>
</dbReference>
<dbReference type="InterPro" id="IPR015342">
    <property type="entry name" value="PEX1-N_C-lobe"/>
</dbReference>
<dbReference type="PANTHER" id="PTHR23077">
    <property type="entry name" value="AAA-FAMILY ATPASE"/>
    <property type="match status" value="1"/>
</dbReference>
<dbReference type="PANTHER" id="PTHR23077:SF12">
    <property type="entry name" value="PEROXISOMAL ATPASE PEX1"/>
    <property type="match status" value="1"/>
</dbReference>
<dbReference type="Pfam" id="PF00004">
    <property type="entry name" value="AAA"/>
    <property type="match status" value="2"/>
</dbReference>
<dbReference type="Pfam" id="PF17862">
    <property type="entry name" value="AAA_lid_3"/>
    <property type="match status" value="1"/>
</dbReference>
<dbReference type="Pfam" id="PF09262">
    <property type="entry name" value="PEX-1N"/>
    <property type="match status" value="1"/>
</dbReference>
<dbReference type="SMART" id="SM00382">
    <property type="entry name" value="AAA"/>
    <property type="match status" value="2"/>
</dbReference>
<dbReference type="SUPFAM" id="SSF54585">
    <property type="entry name" value="Cdc48 domain 2-like"/>
    <property type="match status" value="1"/>
</dbReference>
<dbReference type="SUPFAM" id="SSF52540">
    <property type="entry name" value="P-loop containing nucleoside triphosphate hydrolases"/>
    <property type="match status" value="2"/>
</dbReference>
<dbReference type="PROSITE" id="PS00674">
    <property type="entry name" value="AAA"/>
    <property type="match status" value="1"/>
</dbReference>
<reference key="1">
    <citation type="journal article" date="1991" name="Cell">
        <title>PAS1, a yeast gene required for peroxisome biogenesis, encodes a member of a novel family of putative ATPases.</title>
        <authorList>
            <person name="Erdmann R."/>
            <person name="Wiebel F.F."/>
            <person name="Flessau A."/>
            <person name="Rytka J."/>
            <person name="Beyer A."/>
            <person name="Froehlich K.-U."/>
            <person name="Kunau W.-H."/>
        </authorList>
    </citation>
    <scope>NUCLEOTIDE SEQUENCE [GENOMIC DNA]</scope>
</reference>
<reference key="2">
    <citation type="journal article" date="1994" name="Nature">
        <title>Complete DNA sequence of yeast chromosome XI.</title>
        <authorList>
            <person name="Dujon B."/>
            <person name="Alexandraki D."/>
            <person name="Andre B."/>
            <person name="Ansorge W."/>
            <person name="Baladron V."/>
            <person name="Ballesta J.P.G."/>
            <person name="Banrevi A."/>
            <person name="Bolle P.-A."/>
            <person name="Bolotin-Fukuhara M."/>
            <person name="Bossier P."/>
            <person name="Bou G."/>
            <person name="Boyer J."/>
            <person name="Buitrago M.J."/>
            <person name="Cheret G."/>
            <person name="Colleaux L."/>
            <person name="Daignan-Fornier B."/>
            <person name="del Rey F."/>
            <person name="Dion C."/>
            <person name="Domdey H."/>
            <person name="Duesterhoeft A."/>
            <person name="Duesterhus S."/>
            <person name="Entian K.-D."/>
            <person name="Erfle H."/>
            <person name="Esteban P.F."/>
            <person name="Feldmann H."/>
            <person name="Fernandes L."/>
            <person name="Fobo G.M."/>
            <person name="Fritz C."/>
            <person name="Fukuhara H."/>
            <person name="Gabel C."/>
            <person name="Gaillon L."/>
            <person name="Garcia-Cantalejo J.M."/>
            <person name="Garcia-Ramirez J.J."/>
            <person name="Gent M.E."/>
            <person name="Ghazvini M."/>
            <person name="Goffeau A."/>
            <person name="Gonzalez A."/>
            <person name="Grothues D."/>
            <person name="Guerreiro P."/>
            <person name="Hegemann J.H."/>
            <person name="Hewitt N."/>
            <person name="Hilger F."/>
            <person name="Hollenberg C.P."/>
            <person name="Horaitis O."/>
            <person name="Indge K.J."/>
            <person name="Jacquier A."/>
            <person name="James C.M."/>
            <person name="Jauniaux J.-C."/>
            <person name="Jimenez A."/>
            <person name="Keuchel H."/>
            <person name="Kirchrath L."/>
            <person name="Kleine K."/>
            <person name="Koetter P."/>
            <person name="Legrain P."/>
            <person name="Liebl S."/>
            <person name="Louis E.J."/>
            <person name="Maia e Silva A."/>
            <person name="Marck C."/>
            <person name="Monnier A.-L."/>
            <person name="Moestl D."/>
            <person name="Mueller S."/>
            <person name="Obermaier B."/>
            <person name="Oliver S.G."/>
            <person name="Pallier C."/>
            <person name="Pascolo S."/>
            <person name="Pfeiffer F."/>
            <person name="Philippsen P."/>
            <person name="Planta R.J."/>
            <person name="Pohl F.M."/>
            <person name="Pohl T.M."/>
            <person name="Poehlmann R."/>
            <person name="Portetelle D."/>
            <person name="Purnelle B."/>
            <person name="Puzos V."/>
            <person name="Ramezani Rad M."/>
            <person name="Rasmussen S.W."/>
            <person name="Remacha M.A."/>
            <person name="Revuelta J.L."/>
            <person name="Richard G.-F."/>
            <person name="Rieger M."/>
            <person name="Rodrigues-Pousada C."/>
            <person name="Rose M."/>
            <person name="Rupp T."/>
            <person name="Santos M.A."/>
            <person name="Schwager C."/>
            <person name="Sensen C."/>
            <person name="Skala J."/>
            <person name="Soares H."/>
            <person name="Sor F."/>
            <person name="Stegemann J."/>
            <person name="Tettelin H."/>
            <person name="Thierry A."/>
            <person name="Tzermia M."/>
            <person name="Urrestarazu L.A."/>
            <person name="van Dyck L."/>
            <person name="van Vliet-Reedijk J.C."/>
            <person name="Valens M."/>
            <person name="Vandenbol M."/>
            <person name="Vilela C."/>
            <person name="Vissers S."/>
            <person name="von Wettstein D."/>
            <person name="Voss H."/>
            <person name="Wiemann S."/>
            <person name="Xu G."/>
            <person name="Zimmermann J."/>
            <person name="Haasemann M."/>
            <person name="Becker I."/>
            <person name="Mewes H.-W."/>
        </authorList>
    </citation>
    <scope>NUCLEOTIDE SEQUENCE [LARGE SCALE GENOMIC DNA]</scope>
    <source>
        <strain>ATCC 204508 / S288c</strain>
    </source>
</reference>
<reference key="3">
    <citation type="journal article" date="2014" name="G3 (Bethesda)">
        <title>The reference genome sequence of Saccharomyces cerevisiae: Then and now.</title>
        <authorList>
            <person name="Engel S.R."/>
            <person name="Dietrich F.S."/>
            <person name="Fisk D.G."/>
            <person name="Binkley G."/>
            <person name="Balakrishnan R."/>
            <person name="Costanzo M.C."/>
            <person name="Dwight S.S."/>
            <person name="Hitz B.C."/>
            <person name="Karra K."/>
            <person name="Nash R.S."/>
            <person name="Weng S."/>
            <person name="Wong E.D."/>
            <person name="Lloyd P."/>
            <person name="Skrzypek M.S."/>
            <person name="Miyasato S.R."/>
            <person name="Simison M."/>
            <person name="Cherry J.M."/>
        </authorList>
    </citation>
    <scope>GENOME REANNOTATION</scope>
    <source>
        <strain>ATCC 204508 / S288c</strain>
    </source>
</reference>
<reference key="4">
    <citation type="journal article" date="1994" name="Yeast">
        <title>Effect of site-directed mutagenesis of conserved lysine residues upon Pas1 protein function in peroxisome biogenesis.</title>
        <authorList>
            <person name="Krause T."/>
            <person name="Kunau W.-H."/>
            <person name="Erdmann R."/>
        </authorList>
    </citation>
    <scope>MUTAGENESIS OF LYS-467 AND LYS-744</scope>
</reference>
<reference key="5">
    <citation type="journal article" date="2003" name="Nature">
        <title>Global analysis of protein localization in budding yeast.</title>
        <authorList>
            <person name="Huh W.-K."/>
            <person name="Falvo J.V."/>
            <person name="Gerke L.C."/>
            <person name="Carroll A.S."/>
            <person name="Howson R.W."/>
            <person name="Weissman J.S."/>
            <person name="O'Shea E.K."/>
        </authorList>
    </citation>
    <scope>SUBCELLULAR LOCATION [LARGE SCALE ANALYSIS]</scope>
</reference>
<reference key="6">
    <citation type="journal article" date="2003" name="Nature">
        <title>Global analysis of protein expression in yeast.</title>
        <authorList>
            <person name="Ghaemmaghami S."/>
            <person name="Huh W.-K."/>
            <person name="Bower K."/>
            <person name="Howson R.W."/>
            <person name="Belle A."/>
            <person name="Dephoure N."/>
            <person name="O'Shea E.K."/>
            <person name="Weissman J.S."/>
        </authorList>
    </citation>
    <scope>LEVEL OF PROTEIN EXPRESSION [LARGE SCALE ANALYSIS]</scope>
</reference>
<reference key="7">
    <citation type="journal article" date="2005" name="FEBS J.">
        <title>Structural and functional analysis of the interaction of the AAA-peroxins Pex1p and Pex6p.</title>
        <authorList>
            <person name="Birschmann I."/>
            <person name="Rosenkranz K."/>
            <person name="Erdmann R."/>
            <person name="Kunau W.-H."/>
        </authorList>
    </citation>
    <scope>FUNCTION</scope>
    <scope>INTERACTION WITH PEX6</scope>
    <scope>INDUCTION</scope>
    <scope>MUTAGENESIS OF LYS-467; ASP-525; LYS-744 AND ASP-797</scope>
</reference>
<reference key="8">
    <citation type="journal article" date="2005" name="Nat. Cell Biol.">
        <title>Functional role of the AAA peroxins in dislocation of the cycling PTS1 receptor back to the cytosol.</title>
        <authorList>
            <person name="Platta H.W."/>
            <person name="Grunau S."/>
            <person name="Rosenkranz K."/>
            <person name="Girzalsky W."/>
            <person name="Erdmann R."/>
        </authorList>
    </citation>
    <scope>FUNCTION</scope>
    <scope>INTERACTION WITH PEX6</scope>
    <scope>MUTAGENESIS OF LYS-467; ASP-525; LYS-744 AND ASP-797</scope>
</reference>
<reference key="9">
    <citation type="journal article" date="2006" name="FEBS J.">
        <title>Functional association of the AAA complex and the peroxisomal importomer.</title>
        <authorList>
            <person name="Rosenkranz K."/>
            <person name="Birschmann I."/>
            <person name="Grunau S."/>
            <person name="Girzalsky W."/>
            <person name="Kunau W.-H."/>
            <person name="Erdmann R."/>
        </authorList>
    </citation>
    <scope>FUNCTION</scope>
    <scope>INTERACTION WITH PEX6</scope>
</reference>
<reference key="10">
    <citation type="journal article" date="2015" name="Proc. Natl. Acad. Sci. U.S.A.">
        <title>Unique double-ring structure of the peroxisomal Pex1/Pex6 ATPase complex revealed by cryo-electron microscopy.</title>
        <authorList>
            <person name="Blok N.B."/>
            <person name="Tan D."/>
            <person name="Wang R.Y."/>
            <person name="Penczek P.A."/>
            <person name="Baker D."/>
            <person name="DiMaio F."/>
            <person name="Rapoport T.A."/>
            <person name="Walz T."/>
        </authorList>
    </citation>
    <scope>FUNCTION</scope>
    <scope>CATALYTIC ACTIVITY</scope>
    <scope>INTERACTION WITH PEX1</scope>
    <scope>MUTAGENESIS OF LYS-744 AND GLU-798</scope>
</reference>
<reference key="11">
    <citation type="journal article" date="2015" name="Nat. Commun.">
        <title>Molecular snapshots of the Pex1/6 AAA+ complex in action.</title>
        <authorList>
            <person name="Ciniawsky S."/>
            <person name="Grimm I."/>
            <person name="Saffian D."/>
            <person name="Girzalsky W."/>
            <person name="Erdmann R."/>
            <person name="Wendler P."/>
        </authorList>
    </citation>
    <scope>FUNCTION</scope>
    <scope>CATALYTIC ACTIVITY</scope>
    <scope>INTERACTION WITH PEX6</scope>
    <scope>MUTAGENESIS OF TYR-488; HIS-495; PHE-771 AND GLU-798</scope>
</reference>
<reference key="12">
    <citation type="journal article" date="2018" name="Nat. Commun.">
        <title>The peroxisomal AAA-ATPase Pex1/Pex6 unfolds substrates by processive threading.</title>
        <authorList>
            <person name="Gardner B.M."/>
            <person name="Castanzo D.T."/>
            <person name="Chowdhury S."/>
            <person name="Stjepanovic G."/>
            <person name="Stefely M.S."/>
            <person name="Hurley J.H."/>
            <person name="Lander G.C."/>
            <person name="Martin A."/>
        </authorList>
    </citation>
    <scope>FUNCTION</scope>
    <scope>CATALYTIC ACTIVITY</scope>
    <scope>INTERACTION WITH PEX6</scope>
</reference>
<organism>
    <name type="scientific">Saccharomyces cerevisiae (strain ATCC 204508 / S288c)</name>
    <name type="common">Baker's yeast</name>
    <dbReference type="NCBI Taxonomy" id="559292"/>
    <lineage>
        <taxon>Eukaryota</taxon>
        <taxon>Fungi</taxon>
        <taxon>Dikarya</taxon>
        <taxon>Ascomycota</taxon>
        <taxon>Saccharomycotina</taxon>
        <taxon>Saccharomycetes</taxon>
        <taxon>Saccharomycetales</taxon>
        <taxon>Saccharomycetaceae</taxon>
        <taxon>Saccharomyces</taxon>
    </lineage>
</organism>
<proteinExistence type="evidence at protein level"/>
<comment type="function">
    <text evidence="4 5 6 7 8 9">Component of the PEX1-PEX6 AAA ATPase complex, a protein dislocase complex that mediates the ATP-dependent extraction of the PEX5 receptor from peroxisomal membranes, an essential step for PEX5 recycling (PubMed:15634331, PubMed:16007078, PubMed:16911527, PubMed:26066397, PubMed:26170309, PubMed:29321502). Specifically recognizes PEX5 monoubiquitinated at 'Cys-6', and pulls it out of the peroxisome lumen through the PEX2-PEX10-PEX12 retrotranslocation channel (PubMed:26066397, PubMed:26170309, PubMed:29321502). Extraction by the PEX1-PEX6 AAA ATPase complex is accompanied by unfolding of the TPR repeats and release of bound cargo from PEX5 (PubMed:29321502).</text>
</comment>
<comment type="catalytic activity">
    <reaction evidence="7 8 9">
        <text>ATP + H2O = ADP + phosphate + H(+)</text>
        <dbReference type="Rhea" id="RHEA:13065"/>
        <dbReference type="ChEBI" id="CHEBI:15377"/>
        <dbReference type="ChEBI" id="CHEBI:15378"/>
        <dbReference type="ChEBI" id="CHEBI:30616"/>
        <dbReference type="ChEBI" id="CHEBI:43474"/>
        <dbReference type="ChEBI" id="CHEBI:456216"/>
    </reaction>
    <physiologicalReaction direction="left-to-right" evidence="7 8 9">
        <dbReference type="Rhea" id="RHEA:13066"/>
    </physiologicalReaction>
</comment>
<comment type="subunit">
    <text evidence="4 5 6 7 8 9">Interacts with PEX6; forming the PEX1-PEX6 AAA ATPase complex, which is composed of a heterohexamer formed by a trimer of PEX1-PEX6 dimers (PubMed:15634331, PubMed:16007078, PubMed:26066397, PubMed:26170309, PubMed:29321502). The PEX1-PEX6 heterooligomers associate with the peroxisomal importomer via interaction of PEX6 with the peroxisomal membrane anchor PEX15 (PubMed:16911527).</text>
</comment>
<comment type="interaction">
    <interactant intactId="EBI-13155">
        <id>P24004</id>
    </interactant>
    <interactant intactId="EBI-13178">
        <id>P33760</id>
        <label>PEX6</label>
    </interactant>
    <organismsDiffer>false</organismsDiffer>
    <experiments>17</experiments>
</comment>
<comment type="subcellular location">
    <subcellularLocation>
        <location evidence="2">Cytoplasm</location>
        <location evidence="2">Cytosol</location>
    </subcellularLocation>
    <subcellularLocation>
        <location evidence="2">Peroxisome membrane</location>
        <topology evidence="2">Peripheral membrane protein</topology>
        <orientation evidence="2">Cytoplasmic side</orientation>
    </subcellularLocation>
</comment>
<comment type="induction">
    <text evidence="4">By oleate.</text>
</comment>
<comment type="domain">
    <text>AAA-cassette D1 is required for interaction with PEX6. ATP-binding in AAA-cassette D2 is required for interaction with PEX6. ATP-binding and hydrolysis in AAA-cassette D2 is required for proper function in PEX5 dislocation.</text>
</comment>
<comment type="miscellaneous">
    <text evidence="3">Present with 2100 molecules/cell in log phase SD medium.</text>
</comment>
<comment type="similarity">
    <text evidence="13">Belongs to the AAA ATPase family.</text>
</comment>
<protein>
    <recommendedName>
        <fullName evidence="13">Peroxisomal ATPase PEX1</fullName>
        <ecNumber evidence="7 8 9">3.6.4.-</ecNumber>
    </recommendedName>
    <alternativeName>
        <fullName evidence="13">Peroxin-1</fullName>
    </alternativeName>
    <alternativeName>
        <fullName>Peroxisomal assembly protein 1</fullName>
    </alternativeName>
    <alternativeName>
        <fullName>Peroxisome biogenesis protein PAS1</fullName>
    </alternativeName>
</protein>
<keyword id="KW-0002">3D-structure</keyword>
<keyword id="KW-0067">ATP-binding</keyword>
<keyword id="KW-0963">Cytoplasm</keyword>
<keyword id="KW-0378">Hydrolase</keyword>
<keyword id="KW-0472">Membrane</keyword>
<keyword id="KW-0547">Nucleotide-binding</keyword>
<keyword id="KW-0576">Peroxisome</keyword>
<keyword id="KW-0962">Peroxisome biogenesis</keyword>
<keyword id="KW-0653">Protein transport</keyword>
<keyword id="KW-1185">Reference proteome</keyword>
<keyword id="KW-0677">Repeat</keyword>
<keyword id="KW-0813">Transport</keyword>
<feature type="chain" id="PRO_0000084606" description="Peroxisomal ATPase PEX1">
    <location>
        <begin position="1"/>
        <end position="1043"/>
    </location>
</feature>
<feature type="region of interest" description="AAA-cassette D1">
    <location>
        <begin position="453"/>
        <end position="626"/>
    </location>
</feature>
<feature type="region of interest" description="AAA-cassette D2">
    <location>
        <begin position="733"/>
        <end position="926"/>
    </location>
</feature>
<feature type="binding site" evidence="1">
    <location>
        <begin position="461"/>
        <end position="468"/>
    </location>
    <ligand>
        <name>ATP</name>
        <dbReference type="ChEBI" id="CHEBI:30616"/>
    </ligand>
</feature>
<feature type="binding site" evidence="1">
    <location>
        <begin position="738"/>
        <end position="745"/>
    </location>
    <ligand>
        <name>ATP</name>
        <dbReference type="ChEBI" id="CHEBI:30616"/>
    </ligand>
</feature>
<feature type="mutagenesis site" description="In PEX1pA1; no effect." evidence="4 5 10">
    <original>K</original>
    <variation>E</variation>
    <location>
        <position position="467"/>
    </location>
</feature>
<feature type="mutagenesis site" description="Cells are able to grow on a medium with oleate as a sole carbon source." evidence="7">
    <original>Y</original>
    <variation>A</variation>
    <location>
        <position position="488"/>
    </location>
</feature>
<feature type="mutagenesis site" description="Cells are able to grow on a medium with oleate as a sole carbon source." evidence="7">
    <original>H</original>
    <variation>A</variation>
    <location>
        <position position="495"/>
    </location>
</feature>
<feature type="mutagenesis site" description="In PEX1pB1; no effect." evidence="4 5">
    <original>D</original>
    <variation>Q</variation>
    <location>
        <position position="525"/>
    </location>
</feature>
<feature type="mutagenesis site" description="In Amut mutant; abolished ATPase activity of the PEX1-PEX6 AAA ATPase complex." evidence="8">
    <original>K</original>
    <variation>A</variation>
    <location>
        <position position="744"/>
    </location>
</feature>
<feature type="mutagenesis site" description="In PEX1pA2; decreased binding to PEX6. Results in accumulation of PEX5 on peroxisomal membranes." evidence="4 5 10">
    <original>K</original>
    <variation>E</variation>
    <location>
        <position position="744"/>
    </location>
</feature>
<feature type="mutagenesis site" description="Cells are unable to grow on a medium with oleate as a sole carbon source." evidence="7">
    <original>F</original>
    <variation>A</variation>
    <location>
        <position position="771"/>
    </location>
</feature>
<feature type="mutagenesis site" description="In PEX1pB2; results in accumulation of PEX5 on peroxisomal membranes." evidence="4 5">
    <original>D</original>
    <variation>Q</variation>
    <location>
        <position position="797"/>
    </location>
</feature>
<feature type="mutagenesis site" description="In Bmut mutant; decreased ATPase activity of the PEX1-PEX6 AAA ATPase complex." evidence="8">
    <original>E</original>
    <variation>A</variation>
    <location>
        <position position="798"/>
    </location>
</feature>
<feature type="mutagenesis site" description="Abolished ATPase activity of the PEX1-PEX6 AAA ATPase complex." evidence="7">
    <original>E</original>
    <variation>Q</variation>
    <location>
        <position position="798"/>
    </location>
</feature>
<feature type="sequence conflict" description="In Ref. 1; AAA34842." evidence="13" ref="1">
    <original>S</original>
    <variation>T</variation>
    <location>
        <position position="354"/>
    </location>
</feature>